<name>FMRF_DOROP</name>
<proteinExistence type="evidence at protein level"/>
<comment type="function">
    <text evidence="1">Excitatory neurotransmitters that directly modulate chromatophore function by activating chromatophore expansion at the chromatophore neuromuscular junction.</text>
</comment>
<comment type="subcellular location">
    <subcellularLocation>
        <location evidence="1">Secreted</location>
    </subcellularLocation>
</comment>
<comment type="mass spectrometry">
    <molecule>FIRF-amide</molecule>
    <text>FIRF-amide.</text>
</comment>
<comment type="mass spectrometry">
    <molecule>ALSGDAFLRF-amide</molecule>
    <text>ALSGDAFLRF-amide.</text>
</comment>
<comment type="mass spectrometry">
    <molecule>FLRF-amide</molecule>
    <text>FLRF-amide.</text>
</comment>
<comment type="mass spectrometry">
    <molecule>FMRF-amide 1</molecule>
    <text>FMRF-amide 1.</text>
</comment>
<comment type="mass spectrometry">
    <molecule>FMRF-amide 2</molecule>
    <text>FMRF-amide 2.</text>
</comment>
<comment type="mass spectrometry">
    <molecule>FMRF-amide 3</molecule>
    <text>FMRF-amide 3.</text>
</comment>
<comment type="mass spectrometry">
    <molecule>FMRF-amide 4</molecule>
    <text>FMRF-amide 4.</text>
</comment>
<comment type="mass spectrometry">
    <molecule>FMRF-amide 5</molecule>
    <text>FMRF-amide 5.</text>
</comment>
<comment type="mass spectrometry">
    <molecule>FMRF-amide 6</molecule>
    <text>FMRF-amide 6.</text>
</comment>
<comment type="mass spectrometry">
    <molecule>FMRF-amide 7</molecule>
    <text>FMRF-amide 7.</text>
</comment>
<comment type="mass spectrometry">
    <molecule>FMRF-amide 8</molecule>
    <text>FMRF-amide 8.</text>
</comment>
<comment type="mass spectrometry">
    <molecule>FMRF-amide 9</molecule>
    <text>FMRF-amide 9.</text>
</comment>
<comment type="mass spectrometry">
    <molecule>FMRF-amide 10</molecule>
    <text>FMRF-amide 10.</text>
</comment>
<comment type="mass spectrometry">
    <molecule>FMRF-amide 11</molecule>
    <text>FMRF-amide 11.</text>
</comment>
<comment type="similarity">
    <text evidence="2">Belongs to the FARP (FMRFamide related peptide) family.</text>
</comment>
<keyword id="KW-0027">Amidation</keyword>
<keyword id="KW-0165">Cleavage on pair of basic residues</keyword>
<keyword id="KW-0527">Neuropeptide</keyword>
<keyword id="KW-0677">Repeat</keyword>
<keyword id="KW-0964">Secreted</keyword>
<keyword id="KW-0732">Signal</keyword>
<reference evidence="6 7" key="1">
    <citation type="journal article" date="2000" name="J. Exp. Biol.">
        <title>Mass spectrometric survey of peptides in cephalopods with an emphasis on the FMRFamide-related peptides.</title>
        <authorList>
            <person name="Sweedler J.V."/>
            <person name="Li L."/>
            <person name="Floyd P."/>
            <person name="Gilly W."/>
        </authorList>
    </citation>
    <scope>NUCLEOTIDE SEQUENCE [MRNA]</scope>
    <scope>MASS SPECTROMETRY</scope>
    <scope>AMIDATION AT PHE-71; PHE-83; PHE-100; PHE-174; PHE-181; PHE-200; PHE-211; PHE-222; PHE-242; PHE-260; PHE-271; PHE-283; PHE-299 AND PHE-318</scope>
    <source>
        <tissue evidence="7">Cervicothoracic ganglion</tissue>
    </source>
</reference>
<organism>
    <name type="scientific">Doryteuthis opalescens</name>
    <name type="common">California market squid</name>
    <name type="synonym">Loligo opalescens</name>
    <dbReference type="NCBI Taxonomy" id="1051066"/>
    <lineage>
        <taxon>Eukaryota</taxon>
        <taxon>Metazoa</taxon>
        <taxon>Spiralia</taxon>
        <taxon>Lophotrochozoa</taxon>
        <taxon>Mollusca</taxon>
        <taxon>Cephalopoda</taxon>
        <taxon>Coleoidea</taxon>
        <taxon>Decapodiformes</taxon>
        <taxon>Myopsida</taxon>
        <taxon>Loliginidae</taxon>
        <taxon>Doryteuthis</taxon>
    </lineage>
</organism>
<protein>
    <recommendedName>
        <fullName evidence="7">FMRFamide-related neuropeptides</fullName>
    </recommendedName>
    <component>
        <recommendedName>
            <fullName evidence="5">FIRF-amide</fullName>
        </recommendedName>
    </component>
    <component>
        <recommendedName>
            <fullName evidence="5">ALSGDAFLRF-amide</fullName>
        </recommendedName>
    </component>
    <component>
        <recommendedName>
            <fullName evidence="5">FLRF-amide</fullName>
        </recommendedName>
    </component>
    <component>
        <recommendedName>
            <fullName evidence="5">FMRF-amide 1</fullName>
        </recommendedName>
    </component>
    <component>
        <recommendedName>
            <fullName evidence="5">FMRF-amide 2</fullName>
        </recommendedName>
    </component>
    <component>
        <recommendedName>
            <fullName evidence="5">FMRF-amide 3</fullName>
        </recommendedName>
    </component>
    <component>
        <recommendedName>
            <fullName evidence="5">FMRF-amide 4</fullName>
        </recommendedName>
    </component>
    <component>
        <recommendedName>
            <fullName evidence="5">FMRF-amide 5</fullName>
        </recommendedName>
    </component>
    <component>
        <recommendedName>
            <fullName evidence="5">FMRF-amide 6</fullName>
        </recommendedName>
    </component>
    <component>
        <recommendedName>
            <fullName evidence="5">FMRF-amide 7</fullName>
        </recommendedName>
    </component>
    <component>
        <recommendedName>
            <fullName evidence="5">FMRF-amide 8</fullName>
        </recommendedName>
    </component>
    <component>
        <recommendedName>
            <fullName evidence="5">FMRF-amide 9</fullName>
        </recommendedName>
    </component>
    <component>
        <recommendedName>
            <fullName evidence="5">FMRF-amide 10</fullName>
        </recommendedName>
    </component>
    <component>
        <recommendedName>
            <fullName evidence="5">FMRF-amide 11</fullName>
        </recommendedName>
    </component>
</protein>
<evidence type="ECO:0000250" key="1">
    <source>
        <dbReference type="UniProtKB" id="P91889"/>
    </source>
</evidence>
<evidence type="ECO:0000255" key="2"/>
<evidence type="ECO:0000256" key="3">
    <source>
        <dbReference type="SAM" id="MobiDB-lite"/>
    </source>
</evidence>
<evidence type="ECO:0000269" key="4">
    <source>
    </source>
</evidence>
<evidence type="ECO:0000303" key="5">
    <source>
    </source>
</evidence>
<evidence type="ECO:0000305" key="6"/>
<evidence type="ECO:0000312" key="7">
    <source>
        <dbReference type="EMBL" id="AAG22544.1"/>
    </source>
</evidence>
<sequence>MRCWSPCSLLVVIVIYCLSSHTSEAFDLAQACVESQRLSLLPICDTIFAVQQEGVQQSADDGMRSKRFIRFGRALSGDAFLRFGKNVPDLPFEDKRFLRFGRAAPQLDELLKQALQRVESLQKADETSVRRKRSTDAAPQNNAENPEQKNDSAKITKRYIDDVEDSDVKRFMRFGKRFMRFGRNPSDVGNKLTEKRFMRFGRDPEKRFMRFGKSDDKRFMRFGRNPSDAEDELEEDKRFMRFGRGGEDDEEEAEKRFMRFGRDPEKKFMRFGKSGEDKRFMRFGRNPDEQEADKRFMRFGRGGEDDEVSTEDKRFMRFGRSADKCKGCLEG</sequence>
<accession>Q9GSL0</accession>
<feature type="signal peptide" evidence="2">
    <location>
        <begin position="1"/>
        <end position="25"/>
    </location>
</feature>
<feature type="propeptide" id="PRO_0000403999" evidence="4">
    <location>
        <begin position="26"/>
        <end position="65"/>
    </location>
</feature>
<feature type="peptide" id="PRO_0000404000" description="FIRF-amide" evidence="4">
    <location>
        <begin position="68"/>
        <end position="71"/>
    </location>
</feature>
<feature type="peptide" id="PRO_0000404001" description="ALSGDAFLRF-amide" evidence="4">
    <location>
        <begin position="74"/>
        <end position="83"/>
    </location>
</feature>
<feature type="propeptide" id="PRO_0000404002" evidence="4">
    <location>
        <begin position="86"/>
        <end position="94"/>
    </location>
</feature>
<feature type="peptide" id="PRO_0000404003" description="FLRF-amide" evidence="4">
    <location>
        <begin position="97"/>
        <end position="100"/>
    </location>
</feature>
<feature type="propeptide" id="PRO_0000404004" evidence="4">
    <location>
        <begin position="103"/>
        <end position="168"/>
    </location>
</feature>
<feature type="peptide" id="PRO_0000404005" description="FMRF-amide 1" evidence="4">
    <location>
        <begin position="171"/>
        <end position="174"/>
    </location>
</feature>
<feature type="peptide" id="PRO_0000404006" description="FMRF-amide 2" evidence="4">
    <location>
        <begin position="178"/>
        <end position="181"/>
    </location>
</feature>
<feature type="propeptide" id="PRO_0000404007" evidence="4">
    <location>
        <begin position="184"/>
        <end position="194"/>
    </location>
</feature>
<feature type="peptide" id="PRO_0000404008" description="FMRF-amide 3" evidence="4">
    <location>
        <begin position="197"/>
        <end position="200"/>
    </location>
</feature>
<feature type="propeptide" id="PRO_0000404009" evidence="4">
    <location>
        <begin position="203"/>
        <end position="205"/>
    </location>
</feature>
<feature type="peptide" id="PRO_0000404010" description="FMRF-amide 4" evidence="4">
    <location>
        <begin position="208"/>
        <end position="211"/>
    </location>
</feature>
<feature type="propeptide" id="PRO_0000404011" evidence="4">
    <location>
        <begin position="214"/>
        <end position="216"/>
    </location>
</feature>
<feature type="peptide" id="PRO_0000404012" description="FMRF-amide 5" evidence="4">
    <location>
        <begin position="219"/>
        <end position="222"/>
    </location>
</feature>
<feature type="propeptide" id="PRO_0000404013" evidence="4">
    <location>
        <begin position="225"/>
        <end position="236"/>
    </location>
</feature>
<feature type="peptide" id="PRO_0000404014" description="FMRF-amide 6" evidence="4">
    <location>
        <begin position="239"/>
        <end position="242"/>
    </location>
</feature>
<feature type="propeptide" id="PRO_0000404015" evidence="4">
    <location>
        <begin position="245"/>
        <end position="254"/>
    </location>
</feature>
<feature type="peptide" id="PRO_0000404016" description="FMRF-amide 7" evidence="4">
    <location>
        <begin position="257"/>
        <end position="260"/>
    </location>
</feature>
<feature type="propeptide" id="PRO_0000404017" evidence="4">
    <location>
        <begin position="263"/>
        <end position="265"/>
    </location>
</feature>
<feature type="peptide" id="PRO_0000404018" description="FMRF-amide 8" evidence="4">
    <location>
        <begin position="268"/>
        <end position="271"/>
    </location>
</feature>
<feature type="propeptide" id="PRO_0000404019" evidence="4">
    <location>
        <begin position="274"/>
        <end position="277"/>
    </location>
</feature>
<feature type="peptide" id="PRO_0000404020" description="FMRF-amide 9" evidence="4">
    <location>
        <begin position="280"/>
        <end position="283"/>
    </location>
</feature>
<feature type="propeptide" id="PRO_0000404021" evidence="4">
    <location>
        <begin position="286"/>
        <end position="293"/>
    </location>
</feature>
<feature type="peptide" id="PRO_0000404022" description="FMRF-amide 10" evidence="4">
    <location>
        <begin position="296"/>
        <end position="299"/>
    </location>
</feature>
<feature type="propeptide" id="PRO_0000404023" evidence="4">
    <location>
        <begin position="302"/>
        <end position="312"/>
    </location>
</feature>
<feature type="peptide" id="PRO_0000404024" description="FMRF-amide 11" evidence="4">
    <location>
        <begin position="315"/>
        <end position="318"/>
    </location>
</feature>
<feature type="propeptide" id="PRO_0000404025" evidence="4">
    <location>
        <begin position="321"/>
        <end position="331"/>
    </location>
</feature>
<feature type="region of interest" description="Disordered" evidence="3">
    <location>
        <begin position="122"/>
        <end position="158"/>
    </location>
</feature>
<feature type="region of interest" description="Disordered" evidence="3">
    <location>
        <begin position="279"/>
        <end position="310"/>
    </location>
</feature>
<feature type="compositionally biased region" description="Basic and acidic residues" evidence="3">
    <location>
        <begin position="146"/>
        <end position="158"/>
    </location>
</feature>
<feature type="compositionally biased region" description="Basic and acidic residues" evidence="3">
    <location>
        <begin position="279"/>
        <end position="296"/>
    </location>
</feature>
<feature type="modified residue" description="Phenylalanine amide" evidence="4">
    <location>
        <position position="71"/>
    </location>
</feature>
<feature type="modified residue" description="Phenylalanine amide" evidence="4">
    <location>
        <position position="83"/>
    </location>
</feature>
<feature type="modified residue" description="Phenylalanine amide" evidence="4">
    <location>
        <position position="100"/>
    </location>
</feature>
<feature type="modified residue" description="Phenylalanine amide" evidence="4">
    <location>
        <position position="174"/>
    </location>
</feature>
<feature type="modified residue" description="Phenylalanine amide" evidence="4">
    <location>
        <position position="181"/>
    </location>
</feature>
<feature type="modified residue" description="Phenylalanine amide" evidence="4">
    <location>
        <position position="200"/>
    </location>
</feature>
<feature type="modified residue" description="Phenylalanine amide" evidence="4">
    <location>
        <position position="211"/>
    </location>
</feature>
<feature type="modified residue" description="Phenylalanine amide" evidence="4">
    <location>
        <position position="222"/>
    </location>
</feature>
<feature type="modified residue" description="Phenylalanine amide" evidence="4">
    <location>
        <position position="242"/>
    </location>
</feature>
<feature type="modified residue" description="Phenylalanine amide" evidence="4">
    <location>
        <position position="260"/>
    </location>
</feature>
<feature type="modified residue" description="Phenylalanine amide" evidence="4">
    <location>
        <position position="271"/>
    </location>
</feature>
<feature type="modified residue" description="Phenylalanine amide" evidence="4">
    <location>
        <position position="283"/>
    </location>
</feature>
<feature type="modified residue" description="Phenylalanine amide" evidence="4">
    <location>
        <position position="299"/>
    </location>
</feature>
<feature type="modified residue" description="Phenylalanine amide" evidence="4">
    <location>
        <position position="318"/>
    </location>
</feature>
<gene>
    <name evidence="5" type="primary">FMRFa</name>
</gene>
<dbReference type="EMBL" id="AF303160">
    <property type="protein sequence ID" value="AAG22544.1"/>
    <property type="molecule type" value="mRNA"/>
</dbReference>
<dbReference type="SMR" id="Q9GSL0"/>
<dbReference type="GO" id="GO:0005576">
    <property type="term" value="C:extracellular region"/>
    <property type="evidence" value="ECO:0007669"/>
    <property type="project" value="UniProtKB-SubCell"/>
</dbReference>
<dbReference type="GO" id="GO:0007218">
    <property type="term" value="P:neuropeptide signaling pathway"/>
    <property type="evidence" value="ECO:0007669"/>
    <property type="project" value="UniProtKB-KW"/>
</dbReference>
<dbReference type="InterPro" id="IPR002544">
    <property type="entry name" value="FMRFamid-related_peptide-like"/>
</dbReference>
<dbReference type="InterPro" id="IPR051041">
    <property type="entry name" value="FMRFamide-related_np"/>
</dbReference>
<dbReference type="PANTHER" id="PTHR20986">
    <property type="entry name" value="FMRFAMIDE-RELATED PEPTIDES"/>
    <property type="match status" value="1"/>
</dbReference>
<dbReference type="PANTHER" id="PTHR20986:SF22">
    <property type="entry name" value="FMRFAMIDE-RELATED PEPTIDES"/>
    <property type="match status" value="1"/>
</dbReference>
<dbReference type="Pfam" id="PF01581">
    <property type="entry name" value="FARP"/>
    <property type="match status" value="13"/>
</dbReference>